<reference key="1">
    <citation type="journal article" date="1997" name="Nature">
        <title>The complete genome sequence of the Gram-positive bacterium Bacillus subtilis.</title>
        <authorList>
            <person name="Kunst F."/>
            <person name="Ogasawara N."/>
            <person name="Moszer I."/>
            <person name="Albertini A.M."/>
            <person name="Alloni G."/>
            <person name="Azevedo V."/>
            <person name="Bertero M.G."/>
            <person name="Bessieres P."/>
            <person name="Bolotin A."/>
            <person name="Borchert S."/>
            <person name="Borriss R."/>
            <person name="Boursier L."/>
            <person name="Brans A."/>
            <person name="Braun M."/>
            <person name="Brignell S.C."/>
            <person name="Bron S."/>
            <person name="Brouillet S."/>
            <person name="Bruschi C.V."/>
            <person name="Caldwell B."/>
            <person name="Capuano V."/>
            <person name="Carter N.M."/>
            <person name="Choi S.-K."/>
            <person name="Codani J.-J."/>
            <person name="Connerton I.F."/>
            <person name="Cummings N.J."/>
            <person name="Daniel R.A."/>
            <person name="Denizot F."/>
            <person name="Devine K.M."/>
            <person name="Duesterhoeft A."/>
            <person name="Ehrlich S.D."/>
            <person name="Emmerson P.T."/>
            <person name="Entian K.-D."/>
            <person name="Errington J."/>
            <person name="Fabret C."/>
            <person name="Ferrari E."/>
            <person name="Foulger D."/>
            <person name="Fritz C."/>
            <person name="Fujita M."/>
            <person name="Fujita Y."/>
            <person name="Fuma S."/>
            <person name="Galizzi A."/>
            <person name="Galleron N."/>
            <person name="Ghim S.-Y."/>
            <person name="Glaser P."/>
            <person name="Goffeau A."/>
            <person name="Golightly E.J."/>
            <person name="Grandi G."/>
            <person name="Guiseppi G."/>
            <person name="Guy B.J."/>
            <person name="Haga K."/>
            <person name="Haiech J."/>
            <person name="Harwood C.R."/>
            <person name="Henaut A."/>
            <person name="Hilbert H."/>
            <person name="Holsappel S."/>
            <person name="Hosono S."/>
            <person name="Hullo M.-F."/>
            <person name="Itaya M."/>
            <person name="Jones L.-M."/>
            <person name="Joris B."/>
            <person name="Karamata D."/>
            <person name="Kasahara Y."/>
            <person name="Klaerr-Blanchard M."/>
            <person name="Klein C."/>
            <person name="Kobayashi Y."/>
            <person name="Koetter P."/>
            <person name="Koningstein G."/>
            <person name="Krogh S."/>
            <person name="Kumano M."/>
            <person name="Kurita K."/>
            <person name="Lapidus A."/>
            <person name="Lardinois S."/>
            <person name="Lauber J."/>
            <person name="Lazarevic V."/>
            <person name="Lee S.-M."/>
            <person name="Levine A."/>
            <person name="Liu H."/>
            <person name="Masuda S."/>
            <person name="Mauel C."/>
            <person name="Medigue C."/>
            <person name="Medina N."/>
            <person name="Mellado R.P."/>
            <person name="Mizuno M."/>
            <person name="Moestl D."/>
            <person name="Nakai S."/>
            <person name="Noback M."/>
            <person name="Noone D."/>
            <person name="O'Reilly M."/>
            <person name="Ogawa K."/>
            <person name="Ogiwara A."/>
            <person name="Oudega B."/>
            <person name="Park S.-H."/>
            <person name="Parro V."/>
            <person name="Pohl T.M."/>
            <person name="Portetelle D."/>
            <person name="Porwollik S."/>
            <person name="Prescott A.M."/>
            <person name="Presecan E."/>
            <person name="Pujic P."/>
            <person name="Purnelle B."/>
            <person name="Rapoport G."/>
            <person name="Rey M."/>
            <person name="Reynolds S."/>
            <person name="Rieger M."/>
            <person name="Rivolta C."/>
            <person name="Rocha E."/>
            <person name="Roche B."/>
            <person name="Rose M."/>
            <person name="Sadaie Y."/>
            <person name="Sato T."/>
            <person name="Scanlan E."/>
            <person name="Schleich S."/>
            <person name="Schroeter R."/>
            <person name="Scoffone F."/>
            <person name="Sekiguchi J."/>
            <person name="Sekowska A."/>
            <person name="Seror S.J."/>
            <person name="Serror P."/>
            <person name="Shin B.-S."/>
            <person name="Soldo B."/>
            <person name="Sorokin A."/>
            <person name="Tacconi E."/>
            <person name="Takagi T."/>
            <person name="Takahashi H."/>
            <person name="Takemaru K."/>
            <person name="Takeuchi M."/>
            <person name="Tamakoshi A."/>
            <person name="Tanaka T."/>
            <person name="Terpstra P."/>
            <person name="Tognoni A."/>
            <person name="Tosato V."/>
            <person name="Uchiyama S."/>
            <person name="Vandenbol M."/>
            <person name="Vannier F."/>
            <person name="Vassarotti A."/>
            <person name="Viari A."/>
            <person name="Wambutt R."/>
            <person name="Wedler E."/>
            <person name="Wedler H."/>
            <person name="Weitzenegger T."/>
            <person name="Winters P."/>
            <person name="Wipat A."/>
            <person name="Yamamoto H."/>
            <person name="Yamane K."/>
            <person name="Yasumoto K."/>
            <person name="Yata K."/>
            <person name="Yoshida K."/>
            <person name="Yoshikawa H.-F."/>
            <person name="Zumstein E."/>
            <person name="Yoshikawa H."/>
            <person name="Danchin A."/>
        </authorList>
    </citation>
    <scope>NUCLEOTIDE SEQUENCE [LARGE SCALE GENOMIC DNA]</scope>
    <source>
        <strain>168</strain>
    </source>
</reference>
<evidence type="ECO:0000255" key="1"/>
<evidence type="ECO:0000305" key="2"/>
<sequence length="59" mass="6912">MNMYWFLGALLYFLIGTYIFIRVTRDSQSGSWILLALAAPLIIAGYPYFYSKKLLSKRR</sequence>
<comment type="subcellular location">
    <subcellularLocation>
        <location evidence="2">Cell membrane</location>
        <topology evidence="2">Multi-pass membrane protein</topology>
    </subcellularLocation>
</comment>
<proteinExistence type="predicted"/>
<dbReference type="EMBL" id="AL009126">
    <property type="protein sequence ID" value="CAX52558.1"/>
    <property type="molecule type" value="Genomic_DNA"/>
</dbReference>
<dbReference type="RefSeq" id="YP_003097685.1">
    <property type="nucleotide sequence ID" value="NC_000964.3"/>
</dbReference>
<dbReference type="SMR" id="C0H3W0"/>
<dbReference type="FunCoup" id="C0H3W0">
    <property type="interactions" value="1"/>
</dbReference>
<dbReference type="STRING" id="224308.BSU05408"/>
<dbReference type="PaxDb" id="224308-BSU05408"/>
<dbReference type="EnsemblBacteria" id="CAX52558">
    <property type="protein sequence ID" value="CAX52558"/>
    <property type="gene ID" value="BSU_05408"/>
</dbReference>
<dbReference type="GeneID" id="8302941"/>
<dbReference type="KEGG" id="bsu:BSU05408"/>
<dbReference type="InParanoid" id="C0H3W0"/>
<dbReference type="OrthoDB" id="2932516at2"/>
<dbReference type="BioCyc" id="BSUB:BSU05408-MONOMER"/>
<dbReference type="Proteomes" id="UP000001570">
    <property type="component" value="Chromosome"/>
</dbReference>
<dbReference type="GO" id="GO:0005886">
    <property type="term" value="C:plasma membrane"/>
    <property type="evidence" value="ECO:0007669"/>
    <property type="project" value="UniProtKB-SubCell"/>
</dbReference>
<keyword id="KW-1003">Cell membrane</keyword>
<keyword id="KW-0472">Membrane</keyword>
<keyword id="KW-1185">Reference proteome</keyword>
<keyword id="KW-0812">Transmembrane</keyword>
<keyword id="KW-1133">Transmembrane helix</keyword>
<protein>
    <recommendedName>
        <fullName>Uncharacterized membrane protein YdzP</fullName>
    </recommendedName>
</protein>
<feature type="chain" id="PRO_0000379094" description="Uncharacterized membrane protein YdzP">
    <location>
        <begin position="1"/>
        <end position="59"/>
    </location>
</feature>
<feature type="transmembrane region" description="Helical" evidence="1">
    <location>
        <begin position="1"/>
        <end position="21"/>
    </location>
</feature>
<feature type="transmembrane region" description="Helical" evidence="1">
    <location>
        <begin position="30"/>
        <end position="50"/>
    </location>
</feature>
<name>YDZP_BACSU</name>
<accession>C0H3W0</accession>
<gene>
    <name type="primary">ydzP</name>
    <name type="ordered locus">BSU05408</name>
</gene>
<organism>
    <name type="scientific">Bacillus subtilis (strain 168)</name>
    <dbReference type="NCBI Taxonomy" id="224308"/>
    <lineage>
        <taxon>Bacteria</taxon>
        <taxon>Bacillati</taxon>
        <taxon>Bacillota</taxon>
        <taxon>Bacilli</taxon>
        <taxon>Bacillales</taxon>
        <taxon>Bacillaceae</taxon>
        <taxon>Bacillus</taxon>
    </lineage>
</organism>